<accession>Q9CC22</accession>
<name>IF3_MYCLE</name>
<comment type="function">
    <text evidence="1">IF-3 binds to the 30S ribosomal subunit and shifts the equilibrium between 70S ribosomes and their 50S and 30S subunits in favor of the free subunits, thus enhancing the availability of 30S subunits on which protein synthesis initiation begins.</text>
</comment>
<comment type="subunit">
    <text evidence="1">Monomer.</text>
</comment>
<comment type="subcellular location">
    <subcellularLocation>
        <location evidence="1">Cytoplasm</location>
    </subcellularLocation>
</comment>
<comment type="similarity">
    <text evidence="1">Belongs to the IF-3 family.</text>
</comment>
<comment type="sequence caution" evidence="3">
    <conflict type="erroneous initiation">
        <sequence resource="EMBL-CDS" id="CAC31775"/>
    </conflict>
</comment>
<dbReference type="EMBL" id="AL583921">
    <property type="protein sequence ID" value="CAC31775.1"/>
    <property type="status" value="ALT_INIT"/>
    <property type="molecule type" value="Genomic_DNA"/>
</dbReference>
<dbReference type="PIR" id="D87083">
    <property type="entry name" value="D87083"/>
</dbReference>
<dbReference type="SMR" id="Q9CC22"/>
<dbReference type="STRING" id="272631.gene:17575233"/>
<dbReference type="KEGG" id="mle:ML1394"/>
<dbReference type="Leproma" id="ML1394"/>
<dbReference type="eggNOG" id="COG0290">
    <property type="taxonomic scope" value="Bacteria"/>
</dbReference>
<dbReference type="HOGENOM" id="CLU_054919_3_1_11"/>
<dbReference type="Proteomes" id="UP000000806">
    <property type="component" value="Chromosome"/>
</dbReference>
<dbReference type="GO" id="GO:0005829">
    <property type="term" value="C:cytosol"/>
    <property type="evidence" value="ECO:0007669"/>
    <property type="project" value="TreeGrafter"/>
</dbReference>
<dbReference type="GO" id="GO:0016020">
    <property type="term" value="C:membrane"/>
    <property type="evidence" value="ECO:0007669"/>
    <property type="project" value="TreeGrafter"/>
</dbReference>
<dbReference type="GO" id="GO:0043022">
    <property type="term" value="F:ribosome binding"/>
    <property type="evidence" value="ECO:0007669"/>
    <property type="project" value="TreeGrafter"/>
</dbReference>
<dbReference type="GO" id="GO:0003743">
    <property type="term" value="F:translation initiation factor activity"/>
    <property type="evidence" value="ECO:0007669"/>
    <property type="project" value="UniProtKB-UniRule"/>
</dbReference>
<dbReference type="GO" id="GO:0032790">
    <property type="term" value="P:ribosome disassembly"/>
    <property type="evidence" value="ECO:0007669"/>
    <property type="project" value="TreeGrafter"/>
</dbReference>
<dbReference type="FunFam" id="3.10.20.80:FF:000001">
    <property type="entry name" value="Translation initiation factor IF-3"/>
    <property type="match status" value="1"/>
</dbReference>
<dbReference type="FunFam" id="3.30.110.10:FF:000002">
    <property type="entry name" value="Translation initiation factor IF-3"/>
    <property type="match status" value="1"/>
</dbReference>
<dbReference type="Gene3D" id="3.30.110.10">
    <property type="entry name" value="Translation initiation factor 3 (IF-3), C-terminal domain"/>
    <property type="match status" value="1"/>
</dbReference>
<dbReference type="Gene3D" id="3.10.20.80">
    <property type="entry name" value="Translation initiation factor 3 (IF-3), N-terminal domain"/>
    <property type="match status" value="1"/>
</dbReference>
<dbReference type="HAMAP" id="MF_00080">
    <property type="entry name" value="IF_3"/>
    <property type="match status" value="1"/>
</dbReference>
<dbReference type="InterPro" id="IPR036788">
    <property type="entry name" value="T_IF-3_C_sf"/>
</dbReference>
<dbReference type="InterPro" id="IPR036787">
    <property type="entry name" value="T_IF-3_N_sf"/>
</dbReference>
<dbReference type="InterPro" id="IPR019813">
    <property type="entry name" value="Translation_initiation_fac3_CS"/>
</dbReference>
<dbReference type="InterPro" id="IPR001288">
    <property type="entry name" value="Translation_initiation_fac_3"/>
</dbReference>
<dbReference type="InterPro" id="IPR019815">
    <property type="entry name" value="Translation_initiation_fac_3_C"/>
</dbReference>
<dbReference type="InterPro" id="IPR019814">
    <property type="entry name" value="Translation_initiation_fac_3_N"/>
</dbReference>
<dbReference type="NCBIfam" id="TIGR00168">
    <property type="entry name" value="infC"/>
    <property type="match status" value="1"/>
</dbReference>
<dbReference type="PANTHER" id="PTHR10938">
    <property type="entry name" value="TRANSLATION INITIATION FACTOR IF-3"/>
    <property type="match status" value="1"/>
</dbReference>
<dbReference type="PANTHER" id="PTHR10938:SF0">
    <property type="entry name" value="TRANSLATION INITIATION FACTOR IF-3, MITOCHONDRIAL"/>
    <property type="match status" value="1"/>
</dbReference>
<dbReference type="Pfam" id="PF00707">
    <property type="entry name" value="IF3_C"/>
    <property type="match status" value="1"/>
</dbReference>
<dbReference type="Pfam" id="PF05198">
    <property type="entry name" value="IF3_N"/>
    <property type="match status" value="1"/>
</dbReference>
<dbReference type="SUPFAM" id="SSF55200">
    <property type="entry name" value="Translation initiation factor IF3, C-terminal domain"/>
    <property type="match status" value="1"/>
</dbReference>
<dbReference type="SUPFAM" id="SSF54364">
    <property type="entry name" value="Translation initiation factor IF3, N-terminal domain"/>
    <property type="match status" value="1"/>
</dbReference>
<dbReference type="PROSITE" id="PS00938">
    <property type="entry name" value="IF3"/>
    <property type="match status" value="1"/>
</dbReference>
<proteinExistence type="inferred from homology"/>
<protein>
    <recommendedName>
        <fullName evidence="1">Translation initiation factor IF-3</fullName>
    </recommendedName>
</protein>
<sequence length="202" mass="22517">MSTETRVNERIRVPEVRLIGPGGEQVGIVRIEDALRVAADADLDLVEVAPNARPPVCKIMDYGKYKYEVAQKARESRRNQQQTVVKEQKLRPKIDDHDYETKKSHVVRFLEAGSKVKVTIMFRGREQSRPELGYRLLQRLGADVADYGFVETSAKQDGRNMTMVLAPHRGAKTRASARHPEVPGAGSVQDIDATGDTDGSPH</sequence>
<feature type="chain" id="PRO_0000177545" description="Translation initiation factor IF-3">
    <location>
        <begin position="1"/>
        <end position="202"/>
    </location>
</feature>
<feature type="region of interest" description="Disordered" evidence="2">
    <location>
        <begin position="172"/>
        <end position="202"/>
    </location>
</feature>
<reference key="1">
    <citation type="journal article" date="2001" name="Nature">
        <title>Massive gene decay in the leprosy bacillus.</title>
        <authorList>
            <person name="Cole S.T."/>
            <person name="Eiglmeier K."/>
            <person name="Parkhill J."/>
            <person name="James K.D."/>
            <person name="Thomson N.R."/>
            <person name="Wheeler P.R."/>
            <person name="Honore N."/>
            <person name="Garnier T."/>
            <person name="Churcher C.M."/>
            <person name="Harris D.E."/>
            <person name="Mungall K.L."/>
            <person name="Basham D."/>
            <person name="Brown D."/>
            <person name="Chillingworth T."/>
            <person name="Connor R."/>
            <person name="Davies R.M."/>
            <person name="Devlin K."/>
            <person name="Duthoy S."/>
            <person name="Feltwell T."/>
            <person name="Fraser A."/>
            <person name="Hamlin N."/>
            <person name="Holroyd S."/>
            <person name="Hornsby T."/>
            <person name="Jagels K."/>
            <person name="Lacroix C."/>
            <person name="Maclean J."/>
            <person name="Moule S."/>
            <person name="Murphy L.D."/>
            <person name="Oliver K."/>
            <person name="Quail M.A."/>
            <person name="Rajandream M.A."/>
            <person name="Rutherford K.M."/>
            <person name="Rutter S."/>
            <person name="Seeger K."/>
            <person name="Simon S."/>
            <person name="Simmonds M."/>
            <person name="Skelton J."/>
            <person name="Squares R."/>
            <person name="Squares S."/>
            <person name="Stevens K."/>
            <person name="Taylor K."/>
            <person name="Whitehead S."/>
            <person name="Woodward J.R."/>
            <person name="Barrell B.G."/>
        </authorList>
    </citation>
    <scope>NUCLEOTIDE SEQUENCE [LARGE SCALE GENOMIC DNA]</scope>
    <source>
        <strain>TN</strain>
    </source>
</reference>
<keyword id="KW-0963">Cytoplasm</keyword>
<keyword id="KW-0396">Initiation factor</keyword>
<keyword id="KW-0648">Protein biosynthesis</keyword>
<keyword id="KW-1185">Reference proteome</keyword>
<organism>
    <name type="scientific">Mycobacterium leprae (strain TN)</name>
    <dbReference type="NCBI Taxonomy" id="272631"/>
    <lineage>
        <taxon>Bacteria</taxon>
        <taxon>Bacillati</taxon>
        <taxon>Actinomycetota</taxon>
        <taxon>Actinomycetes</taxon>
        <taxon>Mycobacteriales</taxon>
        <taxon>Mycobacteriaceae</taxon>
        <taxon>Mycobacterium</taxon>
    </lineage>
</organism>
<evidence type="ECO:0000255" key="1">
    <source>
        <dbReference type="HAMAP-Rule" id="MF_00080"/>
    </source>
</evidence>
<evidence type="ECO:0000256" key="2">
    <source>
        <dbReference type="SAM" id="MobiDB-lite"/>
    </source>
</evidence>
<evidence type="ECO:0000305" key="3"/>
<gene>
    <name evidence="1" type="primary">infC</name>
    <name type="ordered locus">ML1394</name>
</gene>